<feature type="chain" id="PRO_0000407242" description="RNA-splicing ligase RtcB homolog">
    <location>
        <begin position="1"/>
        <end position="515"/>
    </location>
</feature>
<feature type="active site" description="GMP-histidine intermediate" evidence="1">
    <location>
        <position position="438"/>
    </location>
</feature>
<feature type="binding site" evidence="1">
    <location>
        <position position="121"/>
    </location>
    <ligand>
        <name>Mn(2+)</name>
        <dbReference type="ChEBI" id="CHEBI:29035"/>
        <label>1</label>
    </ligand>
</feature>
<feature type="binding site" evidence="1">
    <location>
        <position position="124"/>
    </location>
    <ligand>
        <name>Mn(2+)</name>
        <dbReference type="ChEBI" id="CHEBI:29035"/>
        <label>1</label>
    </ligand>
</feature>
<feature type="binding site" evidence="1">
    <location>
        <position position="124"/>
    </location>
    <ligand>
        <name>Mn(2+)</name>
        <dbReference type="ChEBI" id="CHEBI:29035"/>
        <label>2</label>
    </ligand>
</feature>
<feature type="binding site" evidence="1">
    <location>
        <begin position="228"/>
        <end position="232"/>
    </location>
    <ligand>
        <name>GMP</name>
        <dbReference type="ChEBI" id="CHEBI:58115"/>
    </ligand>
</feature>
<feature type="binding site" evidence="1">
    <location>
        <position position="229"/>
    </location>
    <ligand>
        <name>Mn(2+)</name>
        <dbReference type="ChEBI" id="CHEBI:29035"/>
        <label>1</label>
    </ligand>
</feature>
<feature type="binding site" evidence="1">
    <location>
        <position position="269"/>
    </location>
    <ligand>
        <name>Mn(2+)</name>
        <dbReference type="ChEBI" id="CHEBI:29035"/>
        <label>2</label>
    </ligand>
</feature>
<feature type="binding site" evidence="1">
    <location>
        <begin position="363"/>
        <end position="364"/>
    </location>
    <ligand>
        <name>GMP</name>
        <dbReference type="ChEBI" id="CHEBI:58115"/>
    </ligand>
</feature>
<feature type="binding site" evidence="1">
    <location>
        <position position="363"/>
    </location>
    <ligand>
        <name>Mn(2+)</name>
        <dbReference type="ChEBI" id="CHEBI:29035"/>
        <label>2</label>
    </ligand>
</feature>
<feature type="binding site" evidence="1">
    <location>
        <begin position="412"/>
        <end position="415"/>
    </location>
    <ligand>
        <name>GMP</name>
        <dbReference type="ChEBI" id="CHEBI:58115"/>
    </ligand>
</feature>
<feature type="binding site" evidence="1">
    <location>
        <position position="419"/>
    </location>
    <ligand>
        <name>GMP</name>
        <dbReference type="ChEBI" id="CHEBI:58115"/>
    </ligand>
</feature>
<feature type="binding site" evidence="1">
    <location>
        <begin position="438"/>
        <end position="441"/>
    </location>
    <ligand>
        <name>GMP</name>
        <dbReference type="ChEBI" id="CHEBI:58115"/>
    </ligand>
</feature>
<feature type="binding site" evidence="1">
    <location>
        <position position="514"/>
    </location>
    <ligand>
        <name>GMP</name>
        <dbReference type="ChEBI" id="CHEBI:58115"/>
    </ligand>
</feature>
<proteinExistence type="inferred from homology"/>
<evidence type="ECO:0000255" key="1">
    <source>
        <dbReference type="HAMAP-Rule" id="MF_03144"/>
    </source>
</evidence>
<comment type="function">
    <text evidence="1">Catalytic subunit of the tRNA-splicing ligase complex that acts by directly joining spliced tRNA halves to mature-sized tRNAs by incorporating the precursor-derived splice junction phosphate into the mature tRNA as a canonical 3',5'-phosphodiester. May act as an RNA ligase with broad substrate specificity, and may function toward other RNAs.</text>
</comment>
<comment type="catalytic activity">
    <reaction evidence="1">
        <text>a 3'-end 3'-phospho-ribonucleotide-RNA + a 5'-end dephospho-ribonucleoside-RNA + GTP = a ribonucleotidyl-ribonucleotide-RNA + GMP + diphosphate</text>
        <dbReference type="Rhea" id="RHEA:68076"/>
        <dbReference type="Rhea" id="RHEA-COMP:10463"/>
        <dbReference type="Rhea" id="RHEA-COMP:13936"/>
        <dbReference type="Rhea" id="RHEA-COMP:17355"/>
        <dbReference type="ChEBI" id="CHEBI:33019"/>
        <dbReference type="ChEBI" id="CHEBI:37565"/>
        <dbReference type="ChEBI" id="CHEBI:58115"/>
        <dbReference type="ChEBI" id="CHEBI:83062"/>
        <dbReference type="ChEBI" id="CHEBI:138284"/>
        <dbReference type="ChEBI" id="CHEBI:173118"/>
        <dbReference type="EC" id="6.5.1.8"/>
    </reaction>
</comment>
<comment type="catalytic activity">
    <reaction evidence="1">
        <text>a 3'-end 2',3'-cyclophospho-ribonucleotide-RNA + a 5'-end dephospho-ribonucleoside-RNA + GTP + H2O = a ribonucleotidyl-ribonucleotide-RNA + GMP + diphosphate + H(+)</text>
        <dbReference type="Rhea" id="RHEA:68080"/>
        <dbReference type="Rhea" id="RHEA-COMP:10464"/>
        <dbReference type="Rhea" id="RHEA-COMP:13936"/>
        <dbReference type="Rhea" id="RHEA-COMP:17355"/>
        <dbReference type="ChEBI" id="CHEBI:15377"/>
        <dbReference type="ChEBI" id="CHEBI:15378"/>
        <dbReference type="ChEBI" id="CHEBI:33019"/>
        <dbReference type="ChEBI" id="CHEBI:37565"/>
        <dbReference type="ChEBI" id="CHEBI:58115"/>
        <dbReference type="ChEBI" id="CHEBI:83064"/>
        <dbReference type="ChEBI" id="CHEBI:138284"/>
        <dbReference type="ChEBI" id="CHEBI:173118"/>
        <dbReference type="EC" id="6.5.1.8"/>
    </reaction>
</comment>
<comment type="cofactor">
    <cofactor evidence="1">
        <name>Mn(2+)</name>
        <dbReference type="ChEBI" id="CHEBI:29035"/>
    </cofactor>
    <text evidence="1">Binds 2 manganese ions per subunit.</text>
</comment>
<comment type="subunit">
    <text evidence="1">Catalytic component of the tRNA-splicing ligase complex.</text>
</comment>
<comment type="miscellaneous">
    <text evidence="1">Ligation probably proceeds through 3 nucleotidyl transfer steps, with 2',3'-cyclic phosphate termini being hydrolyzed to 3'-P termini in a step that precedes 3'-P activation with GMP. In the first nucleotidyl transfer step, RTCB reacts with GTP to form a covalent RTCB-histidine-GMP intermediate with release of PPi; in the second step, the GMP moiety is transferred to the RNA 3'-P; in the third step, the 5'-OH from the opposite RNA strand attacks the activated 3'-P to form a 3',5'-phosphodiester bond and release GMP.</text>
</comment>
<comment type="similarity">
    <text evidence="1">Belongs to the RtcB family.</text>
</comment>
<keyword id="KW-0342">GTP-binding</keyword>
<keyword id="KW-0436">Ligase</keyword>
<keyword id="KW-0464">Manganese</keyword>
<keyword id="KW-0479">Metal-binding</keyword>
<keyword id="KW-0547">Nucleotide-binding</keyword>
<keyword id="KW-1185">Reference proteome</keyword>
<keyword id="KW-0819">tRNA processing</keyword>
<protein>
    <recommendedName>
        <fullName evidence="1">RNA-splicing ligase RtcB homolog</fullName>
        <ecNumber evidence="1">6.5.1.8</ecNumber>
    </recommendedName>
    <alternativeName>
        <fullName evidence="1">3'-phosphate/5'-hydroxy nucleic acid ligase</fullName>
    </alternativeName>
</protein>
<dbReference type="EC" id="6.5.1.8" evidence="1"/>
<dbReference type="EMBL" id="CR940353">
    <property type="protein sequence ID" value="CAI76680.1"/>
    <property type="molecule type" value="Genomic_DNA"/>
</dbReference>
<dbReference type="RefSeq" id="XP_953305.1">
    <property type="nucleotide sequence ID" value="XM_948212.1"/>
</dbReference>
<dbReference type="SMR" id="Q4U923"/>
<dbReference type="FunCoup" id="Q4U923">
    <property type="interactions" value="239"/>
</dbReference>
<dbReference type="STRING" id="5874.Q4U923"/>
<dbReference type="GeneID" id="3862718"/>
<dbReference type="KEGG" id="tan:TA10620"/>
<dbReference type="VEuPathDB" id="PiroplasmaDB:TA10620"/>
<dbReference type="eggNOG" id="KOG3833">
    <property type="taxonomic scope" value="Eukaryota"/>
</dbReference>
<dbReference type="InParanoid" id="Q4U923"/>
<dbReference type="OMA" id="QTRGVEC"/>
<dbReference type="OrthoDB" id="10249697at2759"/>
<dbReference type="Proteomes" id="UP000001950">
    <property type="component" value="Chromosome 4"/>
</dbReference>
<dbReference type="GO" id="GO:0005634">
    <property type="term" value="C:nucleus"/>
    <property type="evidence" value="ECO:0007669"/>
    <property type="project" value="TreeGrafter"/>
</dbReference>
<dbReference type="GO" id="GO:0072669">
    <property type="term" value="C:tRNA-splicing ligase complex"/>
    <property type="evidence" value="ECO:0007669"/>
    <property type="project" value="UniProtKB-UniRule"/>
</dbReference>
<dbReference type="GO" id="GO:0005525">
    <property type="term" value="F:GTP binding"/>
    <property type="evidence" value="ECO:0007669"/>
    <property type="project" value="UniProtKB-KW"/>
</dbReference>
<dbReference type="GO" id="GO:0046872">
    <property type="term" value="F:metal ion binding"/>
    <property type="evidence" value="ECO:0007669"/>
    <property type="project" value="UniProtKB-KW"/>
</dbReference>
<dbReference type="GO" id="GO:0003972">
    <property type="term" value="F:RNA ligase (ATP) activity"/>
    <property type="evidence" value="ECO:0007669"/>
    <property type="project" value="TreeGrafter"/>
</dbReference>
<dbReference type="GO" id="GO:0170057">
    <property type="term" value="F:RNA ligase (GTP) activity"/>
    <property type="evidence" value="ECO:0007669"/>
    <property type="project" value="UniProtKB-EC"/>
</dbReference>
<dbReference type="GO" id="GO:0006388">
    <property type="term" value="P:tRNA splicing, via endonucleolytic cleavage and ligation"/>
    <property type="evidence" value="ECO:0007669"/>
    <property type="project" value="UniProtKB-UniRule"/>
</dbReference>
<dbReference type="FunFam" id="3.90.1860.10:FF:000001">
    <property type="entry name" value="tRNA-splicing ligase RtcB homolog"/>
    <property type="match status" value="1"/>
</dbReference>
<dbReference type="Gene3D" id="3.90.1860.10">
    <property type="entry name" value="tRNA-splicing ligase RtcB"/>
    <property type="match status" value="1"/>
</dbReference>
<dbReference type="HAMAP" id="MF_03144">
    <property type="entry name" value="RtcB_euk"/>
    <property type="match status" value="1"/>
</dbReference>
<dbReference type="InterPro" id="IPR001233">
    <property type="entry name" value="RtcB"/>
</dbReference>
<dbReference type="InterPro" id="IPR036025">
    <property type="entry name" value="RtcB-like_sf"/>
</dbReference>
<dbReference type="InterPro" id="IPR027513">
    <property type="entry name" value="RtcB_euk"/>
</dbReference>
<dbReference type="PANTHER" id="PTHR11118">
    <property type="entry name" value="RNA-SPLICING LIGASE RTCB HOMOLOG"/>
    <property type="match status" value="1"/>
</dbReference>
<dbReference type="PANTHER" id="PTHR11118:SF1">
    <property type="entry name" value="RNA-SPLICING LIGASE RTCB HOMOLOG"/>
    <property type="match status" value="1"/>
</dbReference>
<dbReference type="Pfam" id="PF01139">
    <property type="entry name" value="RtcB"/>
    <property type="match status" value="1"/>
</dbReference>
<dbReference type="SUPFAM" id="SSF103365">
    <property type="entry name" value="Hypothetical protein PH1602"/>
    <property type="match status" value="1"/>
</dbReference>
<dbReference type="PROSITE" id="PS01288">
    <property type="entry name" value="UPF0027"/>
    <property type="match status" value="1"/>
</dbReference>
<sequence length="515" mass="56828">MTKTYKYEDQLHFIQKSDDVKNLFIIKKGFVPNMNVEGHLFANDNLSKLLFDELKQFTDDPGSFLPALKQLANVAALPGIVKSSIALPDAHSGYGFSIGNVAAFDMDNCNSIVSPGGVGFDINCGVRLLRTNLLYKDIEPIKEQLVQKLFDLIPVGVGCQGKIPCDYGDLDNILEYGMDWSVCSGYSWAEDKEHCEDFGRMIQADPTVVSYRAKKRGLSQIGTLGAGNHYGEVQVSIYSNIYVVEEIYDEYSAKVMGIDRIGQVCIMTHSGSRGLGHQVASDALVDMENSLNKSKIKVNDKQLACARINSDEGKKYLKGMAAASNYAWVNRSVMTHLTRKAFEEVLKESADDLDMHVVYDVSHNIAKIEDHMVDGKLKRLLLHRKGSTRAFPPYHPLISADFQHIGQPVLVGGTMGTCSYVLTGTQLAMDLTLGSTCHGSGRTLSRNKSRRVLDYNEVLNNLKEKGISIRVASPKLVTEEAPESYKDVSEVVQTCHDSGISKKCVKLRPVAVIKG</sequence>
<accession>Q4U923</accession>
<organism>
    <name type="scientific">Theileria annulata</name>
    <dbReference type="NCBI Taxonomy" id="5874"/>
    <lineage>
        <taxon>Eukaryota</taxon>
        <taxon>Sar</taxon>
        <taxon>Alveolata</taxon>
        <taxon>Apicomplexa</taxon>
        <taxon>Aconoidasida</taxon>
        <taxon>Piroplasmida</taxon>
        <taxon>Theileriidae</taxon>
        <taxon>Theileria</taxon>
    </lineage>
</organism>
<gene>
    <name type="ORF">TA10620</name>
</gene>
<name>RTCB_THEAN</name>
<reference key="1">
    <citation type="journal article" date="2005" name="Science">
        <title>Genome of the host-cell transforming parasite Theileria annulata compared with T. parva.</title>
        <authorList>
            <person name="Pain A."/>
            <person name="Renauld H."/>
            <person name="Berriman M."/>
            <person name="Murphy L."/>
            <person name="Yeats C.A."/>
            <person name="Weir W."/>
            <person name="Kerhornou A."/>
            <person name="Aslett M."/>
            <person name="Bishop R."/>
            <person name="Bouchier C."/>
            <person name="Cochet M."/>
            <person name="Coulson R.M.R."/>
            <person name="Cronin A."/>
            <person name="de Villiers E.P."/>
            <person name="Fraser A."/>
            <person name="Fosker N."/>
            <person name="Gardner M."/>
            <person name="Goble A."/>
            <person name="Griffiths-Jones S."/>
            <person name="Harris D.E."/>
            <person name="Katzer F."/>
            <person name="Larke N."/>
            <person name="Lord A."/>
            <person name="Maser P."/>
            <person name="McKellar S."/>
            <person name="Mooney P."/>
            <person name="Morton F."/>
            <person name="Nene V."/>
            <person name="O'Neil S."/>
            <person name="Price C."/>
            <person name="Quail M.A."/>
            <person name="Rabbinowitsch E."/>
            <person name="Rawlings N.D."/>
            <person name="Rutter S."/>
            <person name="Saunders D."/>
            <person name="Seeger K."/>
            <person name="Shah T."/>
            <person name="Squares R."/>
            <person name="Squares S."/>
            <person name="Tivey A."/>
            <person name="Walker A.R."/>
            <person name="Woodward J."/>
            <person name="Dobbelaere D.A.E."/>
            <person name="Langsley G."/>
            <person name="Rajandream M.A."/>
            <person name="McKeever D."/>
            <person name="Shiels B."/>
            <person name="Tait A."/>
            <person name="Barrell B.G."/>
            <person name="Hall N."/>
        </authorList>
    </citation>
    <scope>NUCLEOTIDE SEQUENCE [LARGE SCALE GENOMIC DNA]</scope>
    <source>
        <strain>Ankara</strain>
    </source>
</reference>